<sequence length="173" mass="19779">MIAQEREARINGEITAKEVRLISESGEQLGVVSVREALAMAEGQDVDLVEISPTAKPPVCKLMDYGKYKYQQAKKRDEAKKNQKQVQIKEIKFRPGTDEGDYQIKMRNINRFLADGDKVKVTLRFRGREMAHQQLGAQLLERVKEDLAEVAQIESFPKMEGRQMVMMIAPKKK</sequence>
<feature type="chain" id="PRO_0000177549" description="Translation initiation factor IF-3">
    <location>
        <begin position="1"/>
        <end position="173"/>
    </location>
</feature>
<comment type="function">
    <text evidence="1">IF-3 binds to the 30S ribosomal subunit and shifts the equilibrium between 70S ribosomes and their 50S and 30S subunits in favor of the free subunits, thus enhancing the availability of 30S subunits on which protein synthesis initiation begins.</text>
</comment>
<comment type="subunit">
    <text evidence="1">Monomer.</text>
</comment>
<comment type="subcellular location">
    <subcellularLocation>
        <location evidence="1">Cytoplasm</location>
    </subcellularLocation>
</comment>
<comment type="similarity">
    <text evidence="1">Belongs to the IF-3 family.</text>
</comment>
<comment type="sequence caution" evidence="2">
    <conflict type="erroneous initiation">
        <sequence resource="EMBL-CDS" id="AAF41134"/>
    </conflict>
</comment>
<keyword id="KW-0963">Cytoplasm</keyword>
<keyword id="KW-0396">Initiation factor</keyword>
<keyword id="KW-0648">Protein biosynthesis</keyword>
<keyword id="KW-1185">Reference proteome</keyword>
<name>IF3_NEIMB</name>
<protein>
    <recommendedName>
        <fullName evidence="1">Translation initiation factor IF-3</fullName>
    </recommendedName>
</protein>
<accession>P65138</accession>
<accession>Q9JVA2</accession>
<accession>Q9K094</accession>
<organism>
    <name type="scientific">Neisseria meningitidis serogroup B (strain ATCC BAA-335 / MC58)</name>
    <dbReference type="NCBI Taxonomy" id="122586"/>
    <lineage>
        <taxon>Bacteria</taxon>
        <taxon>Pseudomonadati</taxon>
        <taxon>Pseudomonadota</taxon>
        <taxon>Betaproteobacteria</taxon>
        <taxon>Neisseriales</taxon>
        <taxon>Neisseriaceae</taxon>
        <taxon>Neisseria</taxon>
    </lineage>
</organism>
<proteinExistence type="inferred from homology"/>
<evidence type="ECO:0000255" key="1">
    <source>
        <dbReference type="HAMAP-Rule" id="MF_00080"/>
    </source>
</evidence>
<evidence type="ECO:0000305" key="2"/>
<gene>
    <name evidence="1" type="primary">infC</name>
    <name type="ordered locus">NMB0721</name>
</gene>
<dbReference type="EMBL" id="AE002098">
    <property type="protein sequence ID" value="AAF41134.1"/>
    <property type="status" value="ALT_INIT"/>
    <property type="molecule type" value="Genomic_DNA"/>
</dbReference>
<dbReference type="PIR" id="F81167">
    <property type="entry name" value="F81167"/>
</dbReference>
<dbReference type="RefSeq" id="NP_273763.1">
    <property type="nucleotide sequence ID" value="NC_003112.2"/>
</dbReference>
<dbReference type="RefSeq" id="WP_010951024.1">
    <property type="nucleotide sequence ID" value="NC_003112.2"/>
</dbReference>
<dbReference type="SMR" id="P65138"/>
<dbReference type="FunCoup" id="P65138">
    <property type="interactions" value="507"/>
</dbReference>
<dbReference type="STRING" id="122586.NMB0721"/>
<dbReference type="PaxDb" id="122586-NMB0721"/>
<dbReference type="GeneID" id="93386453"/>
<dbReference type="KEGG" id="nme:NMB0721"/>
<dbReference type="PATRIC" id="fig|122586.8.peg.919"/>
<dbReference type="HOGENOM" id="CLU_054919_3_2_4"/>
<dbReference type="InParanoid" id="P65138"/>
<dbReference type="OrthoDB" id="9806014at2"/>
<dbReference type="Proteomes" id="UP000000425">
    <property type="component" value="Chromosome"/>
</dbReference>
<dbReference type="GO" id="GO:0005829">
    <property type="term" value="C:cytosol"/>
    <property type="evidence" value="ECO:0000318"/>
    <property type="project" value="GO_Central"/>
</dbReference>
<dbReference type="GO" id="GO:0043022">
    <property type="term" value="F:ribosome binding"/>
    <property type="evidence" value="ECO:0000318"/>
    <property type="project" value="GO_Central"/>
</dbReference>
<dbReference type="GO" id="GO:0003743">
    <property type="term" value="F:translation initiation factor activity"/>
    <property type="evidence" value="ECO:0000318"/>
    <property type="project" value="GO_Central"/>
</dbReference>
<dbReference type="GO" id="GO:0032790">
    <property type="term" value="P:ribosome disassembly"/>
    <property type="evidence" value="ECO:0000318"/>
    <property type="project" value="GO_Central"/>
</dbReference>
<dbReference type="FunFam" id="3.10.20.80:FF:000001">
    <property type="entry name" value="Translation initiation factor IF-3"/>
    <property type="match status" value="1"/>
</dbReference>
<dbReference type="FunFam" id="3.30.110.10:FF:000001">
    <property type="entry name" value="Translation initiation factor IF-3"/>
    <property type="match status" value="1"/>
</dbReference>
<dbReference type="Gene3D" id="3.30.110.10">
    <property type="entry name" value="Translation initiation factor 3 (IF-3), C-terminal domain"/>
    <property type="match status" value="1"/>
</dbReference>
<dbReference type="Gene3D" id="3.10.20.80">
    <property type="entry name" value="Translation initiation factor 3 (IF-3), N-terminal domain"/>
    <property type="match status" value="1"/>
</dbReference>
<dbReference type="HAMAP" id="MF_00080">
    <property type="entry name" value="IF_3"/>
    <property type="match status" value="1"/>
</dbReference>
<dbReference type="InterPro" id="IPR036788">
    <property type="entry name" value="T_IF-3_C_sf"/>
</dbReference>
<dbReference type="InterPro" id="IPR036787">
    <property type="entry name" value="T_IF-3_N_sf"/>
</dbReference>
<dbReference type="InterPro" id="IPR019813">
    <property type="entry name" value="Translation_initiation_fac3_CS"/>
</dbReference>
<dbReference type="InterPro" id="IPR001288">
    <property type="entry name" value="Translation_initiation_fac_3"/>
</dbReference>
<dbReference type="InterPro" id="IPR019815">
    <property type="entry name" value="Translation_initiation_fac_3_C"/>
</dbReference>
<dbReference type="InterPro" id="IPR019814">
    <property type="entry name" value="Translation_initiation_fac_3_N"/>
</dbReference>
<dbReference type="NCBIfam" id="TIGR00168">
    <property type="entry name" value="infC"/>
    <property type="match status" value="1"/>
</dbReference>
<dbReference type="PANTHER" id="PTHR10938">
    <property type="entry name" value="TRANSLATION INITIATION FACTOR IF-3"/>
    <property type="match status" value="1"/>
</dbReference>
<dbReference type="PANTHER" id="PTHR10938:SF0">
    <property type="entry name" value="TRANSLATION INITIATION FACTOR IF-3, MITOCHONDRIAL"/>
    <property type="match status" value="1"/>
</dbReference>
<dbReference type="Pfam" id="PF00707">
    <property type="entry name" value="IF3_C"/>
    <property type="match status" value="1"/>
</dbReference>
<dbReference type="Pfam" id="PF05198">
    <property type="entry name" value="IF3_N"/>
    <property type="match status" value="1"/>
</dbReference>
<dbReference type="SUPFAM" id="SSF55200">
    <property type="entry name" value="Translation initiation factor IF3, C-terminal domain"/>
    <property type="match status" value="1"/>
</dbReference>
<dbReference type="SUPFAM" id="SSF54364">
    <property type="entry name" value="Translation initiation factor IF3, N-terminal domain"/>
    <property type="match status" value="1"/>
</dbReference>
<dbReference type="PROSITE" id="PS00938">
    <property type="entry name" value="IF3"/>
    <property type="match status" value="1"/>
</dbReference>
<reference key="1">
    <citation type="journal article" date="2000" name="Science">
        <title>Complete genome sequence of Neisseria meningitidis serogroup B strain MC58.</title>
        <authorList>
            <person name="Tettelin H."/>
            <person name="Saunders N.J."/>
            <person name="Heidelberg J.F."/>
            <person name="Jeffries A.C."/>
            <person name="Nelson K.E."/>
            <person name="Eisen J.A."/>
            <person name="Ketchum K.A."/>
            <person name="Hood D.W."/>
            <person name="Peden J.F."/>
            <person name="Dodson R.J."/>
            <person name="Nelson W.C."/>
            <person name="Gwinn M.L."/>
            <person name="DeBoy R.T."/>
            <person name="Peterson J.D."/>
            <person name="Hickey E.K."/>
            <person name="Haft D.H."/>
            <person name="Salzberg S.L."/>
            <person name="White O."/>
            <person name="Fleischmann R.D."/>
            <person name="Dougherty B.A."/>
            <person name="Mason T.M."/>
            <person name="Ciecko A."/>
            <person name="Parksey D.S."/>
            <person name="Blair E."/>
            <person name="Cittone H."/>
            <person name="Clark E.B."/>
            <person name="Cotton M.D."/>
            <person name="Utterback T.R."/>
            <person name="Khouri H.M."/>
            <person name="Qin H."/>
            <person name="Vamathevan J.J."/>
            <person name="Gill J."/>
            <person name="Scarlato V."/>
            <person name="Masignani V."/>
            <person name="Pizza M."/>
            <person name="Grandi G."/>
            <person name="Sun L."/>
            <person name="Smith H.O."/>
            <person name="Fraser C.M."/>
            <person name="Moxon E.R."/>
            <person name="Rappuoli R."/>
            <person name="Venter J.C."/>
        </authorList>
    </citation>
    <scope>NUCLEOTIDE SEQUENCE [LARGE SCALE GENOMIC DNA]</scope>
    <source>
        <strain>ATCC BAA-335 / MC58</strain>
    </source>
</reference>